<accession>Q13Z78</accession>
<feature type="chain" id="PRO_0000322873" description="Recombination protein RecR">
    <location>
        <begin position="1"/>
        <end position="198"/>
    </location>
</feature>
<feature type="domain" description="Toprim" evidence="1">
    <location>
        <begin position="80"/>
        <end position="175"/>
    </location>
</feature>
<feature type="zinc finger region" description="C4-type" evidence="1">
    <location>
        <begin position="57"/>
        <end position="72"/>
    </location>
</feature>
<dbReference type="EMBL" id="CP000270">
    <property type="protein sequence ID" value="ABE30611.1"/>
    <property type="molecule type" value="Genomic_DNA"/>
</dbReference>
<dbReference type="RefSeq" id="WP_011488245.1">
    <property type="nucleotide sequence ID" value="NZ_CP008760.1"/>
</dbReference>
<dbReference type="SMR" id="Q13Z78"/>
<dbReference type="STRING" id="266265.Bxe_A2359"/>
<dbReference type="GeneID" id="97305378"/>
<dbReference type="KEGG" id="bxb:DR64_63"/>
<dbReference type="KEGG" id="bxe:Bxe_A2359"/>
<dbReference type="PATRIC" id="fig|266265.5.peg.2168"/>
<dbReference type="eggNOG" id="COG0353">
    <property type="taxonomic scope" value="Bacteria"/>
</dbReference>
<dbReference type="OrthoDB" id="9802672at2"/>
<dbReference type="Proteomes" id="UP000001817">
    <property type="component" value="Chromosome 1"/>
</dbReference>
<dbReference type="GO" id="GO:0003677">
    <property type="term" value="F:DNA binding"/>
    <property type="evidence" value="ECO:0007669"/>
    <property type="project" value="UniProtKB-UniRule"/>
</dbReference>
<dbReference type="GO" id="GO:0008270">
    <property type="term" value="F:zinc ion binding"/>
    <property type="evidence" value="ECO:0007669"/>
    <property type="project" value="UniProtKB-KW"/>
</dbReference>
<dbReference type="GO" id="GO:0006310">
    <property type="term" value="P:DNA recombination"/>
    <property type="evidence" value="ECO:0007669"/>
    <property type="project" value="UniProtKB-UniRule"/>
</dbReference>
<dbReference type="GO" id="GO:0006281">
    <property type="term" value="P:DNA repair"/>
    <property type="evidence" value="ECO:0007669"/>
    <property type="project" value="UniProtKB-UniRule"/>
</dbReference>
<dbReference type="CDD" id="cd01025">
    <property type="entry name" value="TOPRIM_recR"/>
    <property type="match status" value="1"/>
</dbReference>
<dbReference type="Gene3D" id="3.40.1360.10">
    <property type="match status" value="1"/>
</dbReference>
<dbReference type="Gene3D" id="6.10.250.240">
    <property type="match status" value="1"/>
</dbReference>
<dbReference type="Gene3D" id="1.10.8.420">
    <property type="entry name" value="RecR Domain 1"/>
    <property type="match status" value="1"/>
</dbReference>
<dbReference type="HAMAP" id="MF_00017">
    <property type="entry name" value="RecR"/>
    <property type="match status" value="1"/>
</dbReference>
<dbReference type="InterPro" id="IPR000093">
    <property type="entry name" value="DNA_Rcmb_RecR"/>
</dbReference>
<dbReference type="InterPro" id="IPR023627">
    <property type="entry name" value="Rcmb_RecR"/>
</dbReference>
<dbReference type="InterPro" id="IPR015967">
    <property type="entry name" value="Rcmb_RecR_Znf"/>
</dbReference>
<dbReference type="InterPro" id="IPR006171">
    <property type="entry name" value="TOPRIM_dom"/>
</dbReference>
<dbReference type="InterPro" id="IPR034137">
    <property type="entry name" value="TOPRIM_RecR"/>
</dbReference>
<dbReference type="NCBIfam" id="TIGR00615">
    <property type="entry name" value="recR"/>
    <property type="match status" value="1"/>
</dbReference>
<dbReference type="PANTHER" id="PTHR30446">
    <property type="entry name" value="RECOMBINATION PROTEIN RECR"/>
    <property type="match status" value="1"/>
</dbReference>
<dbReference type="PANTHER" id="PTHR30446:SF0">
    <property type="entry name" value="RECOMBINATION PROTEIN RECR"/>
    <property type="match status" value="1"/>
</dbReference>
<dbReference type="Pfam" id="PF21175">
    <property type="entry name" value="RecR_C"/>
    <property type="match status" value="1"/>
</dbReference>
<dbReference type="Pfam" id="PF21176">
    <property type="entry name" value="RecR_HhH"/>
    <property type="match status" value="1"/>
</dbReference>
<dbReference type="Pfam" id="PF02132">
    <property type="entry name" value="RecR_ZnF"/>
    <property type="match status" value="1"/>
</dbReference>
<dbReference type="Pfam" id="PF13662">
    <property type="entry name" value="Toprim_4"/>
    <property type="match status" value="1"/>
</dbReference>
<dbReference type="SMART" id="SM00493">
    <property type="entry name" value="TOPRIM"/>
    <property type="match status" value="1"/>
</dbReference>
<dbReference type="SUPFAM" id="SSF111304">
    <property type="entry name" value="Recombination protein RecR"/>
    <property type="match status" value="1"/>
</dbReference>
<dbReference type="PROSITE" id="PS01300">
    <property type="entry name" value="RECR"/>
    <property type="match status" value="1"/>
</dbReference>
<dbReference type="PROSITE" id="PS50880">
    <property type="entry name" value="TOPRIM"/>
    <property type="match status" value="1"/>
</dbReference>
<keyword id="KW-0227">DNA damage</keyword>
<keyword id="KW-0233">DNA recombination</keyword>
<keyword id="KW-0234">DNA repair</keyword>
<keyword id="KW-0479">Metal-binding</keyword>
<keyword id="KW-1185">Reference proteome</keyword>
<keyword id="KW-0862">Zinc</keyword>
<keyword id="KW-0863">Zinc-finger</keyword>
<name>RECR_PARXL</name>
<comment type="function">
    <text evidence="1">May play a role in DNA repair. It seems to be involved in an RecBC-independent recombinational process of DNA repair. It may act with RecF and RecO.</text>
</comment>
<comment type="similarity">
    <text evidence="1">Belongs to the RecR family.</text>
</comment>
<evidence type="ECO:0000255" key="1">
    <source>
        <dbReference type="HAMAP-Rule" id="MF_00017"/>
    </source>
</evidence>
<organism>
    <name type="scientific">Paraburkholderia xenovorans (strain LB400)</name>
    <dbReference type="NCBI Taxonomy" id="266265"/>
    <lineage>
        <taxon>Bacteria</taxon>
        <taxon>Pseudomonadati</taxon>
        <taxon>Pseudomonadota</taxon>
        <taxon>Betaproteobacteria</taxon>
        <taxon>Burkholderiales</taxon>
        <taxon>Burkholderiaceae</taxon>
        <taxon>Paraburkholderia</taxon>
    </lineage>
</organism>
<proteinExistence type="inferred from homology"/>
<reference key="1">
    <citation type="journal article" date="2006" name="Proc. Natl. Acad. Sci. U.S.A.">
        <title>Burkholderia xenovorans LB400 harbors a multi-replicon, 9.73-Mbp genome shaped for versatility.</title>
        <authorList>
            <person name="Chain P.S.G."/>
            <person name="Denef V.J."/>
            <person name="Konstantinidis K.T."/>
            <person name="Vergez L.M."/>
            <person name="Agullo L."/>
            <person name="Reyes V.L."/>
            <person name="Hauser L."/>
            <person name="Cordova M."/>
            <person name="Gomez L."/>
            <person name="Gonzalez M."/>
            <person name="Land M."/>
            <person name="Lao V."/>
            <person name="Larimer F."/>
            <person name="LiPuma J.J."/>
            <person name="Mahenthiralingam E."/>
            <person name="Malfatti S.A."/>
            <person name="Marx C.J."/>
            <person name="Parnell J.J."/>
            <person name="Ramette A."/>
            <person name="Richardson P."/>
            <person name="Seeger M."/>
            <person name="Smith D."/>
            <person name="Spilker T."/>
            <person name="Sul W.J."/>
            <person name="Tsoi T.V."/>
            <person name="Ulrich L.E."/>
            <person name="Zhulin I.B."/>
            <person name="Tiedje J.M."/>
        </authorList>
    </citation>
    <scope>NUCLEOTIDE SEQUENCE [LARGE SCALE GENOMIC DNA]</scope>
    <source>
        <strain>LB400</strain>
    </source>
</reference>
<sequence>MKQPSALSALVEALRALPGVGPKSAQRMAYHLMQHDRDGAEKLGRSLLFATEHLQHCEKCNTFTEAQICEVCLDEERDPTLLCVVETPADQIMLEQTMTYRGLYFVLMGRLSPLDGIGPKEIHFDRLVRRASDGVVKEVVLATNFTNEGEATAHYLGQTLKARGLAVTRLARGVPVGGELEYVDAGTIARAMLDRRSM</sequence>
<protein>
    <recommendedName>
        <fullName evidence="1">Recombination protein RecR</fullName>
    </recommendedName>
</protein>
<gene>
    <name evidence="1" type="primary">recR</name>
    <name type="ordered locus">Bxeno_A2073</name>
    <name type="ORF">Bxe_A2359</name>
</gene>